<evidence type="ECO:0000255" key="1">
    <source>
        <dbReference type="HAMAP-Rule" id="MF_00163"/>
    </source>
</evidence>
<proteinExistence type="inferred from homology"/>
<reference key="1">
    <citation type="journal article" date="2008" name="DNA Res.">
        <title>The whole-genome sequencing of the obligate intracellular bacterium Orientia tsutsugamushi revealed massive gene amplification during reductive genome evolution.</title>
        <authorList>
            <person name="Nakayama K."/>
            <person name="Yamashita A."/>
            <person name="Kurokawa K."/>
            <person name="Morimoto T."/>
            <person name="Ogawa M."/>
            <person name="Fukuhara M."/>
            <person name="Urakami H."/>
            <person name="Ohnishi M."/>
            <person name="Uchiyama I."/>
            <person name="Ogura Y."/>
            <person name="Ooka T."/>
            <person name="Oshima K."/>
            <person name="Tamura A."/>
            <person name="Hattori M."/>
            <person name="Hayashi T."/>
        </authorList>
    </citation>
    <scope>NUCLEOTIDE SEQUENCE [LARGE SCALE GENOMIC DNA]</scope>
    <source>
        <strain>Ikeda</strain>
    </source>
</reference>
<keyword id="KW-0378">Hydrolase</keyword>
<keyword id="KW-0408">Iron</keyword>
<keyword id="KW-0479">Metal-binding</keyword>
<keyword id="KW-0648">Protein biosynthesis</keyword>
<name>DEF_ORITI</name>
<sequence length="181" mass="20228">MSILSLITAPDPILKKVASPVDTVNDSIRQLMDDMLETMYHNHGVGLAAPQVAVSKRIIVLDLSKVDIKEDNITNSEYKYPLFMVNPIVKAISNQTATAKEGCLSLPKQAIEVSRYHEIQVTYLDYYNKLTTLNAEGWLARAIQHEVDHLDGILLVDYLSNLKKEAALNTLSKIKDAAYDK</sequence>
<protein>
    <recommendedName>
        <fullName evidence="1">Peptide deformylase</fullName>
        <shortName evidence="1">PDF</shortName>
        <ecNumber evidence="1">3.5.1.88</ecNumber>
    </recommendedName>
    <alternativeName>
        <fullName evidence="1">Polypeptide deformylase</fullName>
    </alternativeName>
</protein>
<feature type="chain" id="PRO_1000097329" description="Peptide deformylase">
    <location>
        <begin position="1"/>
        <end position="181"/>
    </location>
</feature>
<feature type="active site" evidence="1">
    <location>
        <position position="146"/>
    </location>
</feature>
<feature type="binding site" evidence="1">
    <location>
        <position position="103"/>
    </location>
    <ligand>
        <name>Fe cation</name>
        <dbReference type="ChEBI" id="CHEBI:24875"/>
    </ligand>
</feature>
<feature type="binding site" evidence="1">
    <location>
        <position position="145"/>
    </location>
    <ligand>
        <name>Fe cation</name>
        <dbReference type="ChEBI" id="CHEBI:24875"/>
    </ligand>
</feature>
<feature type="binding site" evidence="1">
    <location>
        <position position="149"/>
    </location>
    <ligand>
        <name>Fe cation</name>
        <dbReference type="ChEBI" id="CHEBI:24875"/>
    </ligand>
</feature>
<comment type="function">
    <text evidence="1">Removes the formyl group from the N-terminal Met of newly synthesized proteins. Requires at least a dipeptide for an efficient rate of reaction. N-terminal L-methionine is a prerequisite for activity but the enzyme has broad specificity at other positions.</text>
</comment>
<comment type="catalytic activity">
    <reaction evidence="1">
        <text>N-terminal N-formyl-L-methionyl-[peptide] + H2O = N-terminal L-methionyl-[peptide] + formate</text>
        <dbReference type="Rhea" id="RHEA:24420"/>
        <dbReference type="Rhea" id="RHEA-COMP:10639"/>
        <dbReference type="Rhea" id="RHEA-COMP:10640"/>
        <dbReference type="ChEBI" id="CHEBI:15377"/>
        <dbReference type="ChEBI" id="CHEBI:15740"/>
        <dbReference type="ChEBI" id="CHEBI:49298"/>
        <dbReference type="ChEBI" id="CHEBI:64731"/>
        <dbReference type="EC" id="3.5.1.88"/>
    </reaction>
</comment>
<comment type="cofactor">
    <cofactor evidence="1">
        <name>Fe(2+)</name>
        <dbReference type="ChEBI" id="CHEBI:29033"/>
    </cofactor>
    <text evidence="1">Binds 1 Fe(2+) ion.</text>
</comment>
<comment type="similarity">
    <text evidence="1">Belongs to the polypeptide deformylase family.</text>
</comment>
<accession>B3CTU1</accession>
<dbReference type="EC" id="3.5.1.88" evidence="1"/>
<dbReference type="EMBL" id="AP008981">
    <property type="protein sequence ID" value="BAG40788.1"/>
    <property type="molecule type" value="Genomic_DNA"/>
</dbReference>
<dbReference type="RefSeq" id="WP_012461836.1">
    <property type="nucleotide sequence ID" value="NC_010793.1"/>
</dbReference>
<dbReference type="SMR" id="B3CTU1"/>
<dbReference type="KEGG" id="ott:OTT_1330"/>
<dbReference type="HOGENOM" id="CLU_061901_2_2_5"/>
<dbReference type="OrthoDB" id="9804313at2"/>
<dbReference type="Proteomes" id="UP000001033">
    <property type="component" value="Chromosome"/>
</dbReference>
<dbReference type="GO" id="GO:0046872">
    <property type="term" value="F:metal ion binding"/>
    <property type="evidence" value="ECO:0007669"/>
    <property type="project" value="UniProtKB-KW"/>
</dbReference>
<dbReference type="GO" id="GO:0042586">
    <property type="term" value="F:peptide deformylase activity"/>
    <property type="evidence" value="ECO:0007669"/>
    <property type="project" value="UniProtKB-UniRule"/>
</dbReference>
<dbReference type="GO" id="GO:0006412">
    <property type="term" value="P:translation"/>
    <property type="evidence" value="ECO:0007669"/>
    <property type="project" value="UniProtKB-UniRule"/>
</dbReference>
<dbReference type="CDD" id="cd00487">
    <property type="entry name" value="Pep_deformylase"/>
    <property type="match status" value="1"/>
</dbReference>
<dbReference type="Gene3D" id="3.90.45.10">
    <property type="entry name" value="Peptide deformylase"/>
    <property type="match status" value="1"/>
</dbReference>
<dbReference type="HAMAP" id="MF_00163">
    <property type="entry name" value="Pep_deformylase"/>
    <property type="match status" value="1"/>
</dbReference>
<dbReference type="InterPro" id="IPR023635">
    <property type="entry name" value="Peptide_deformylase"/>
</dbReference>
<dbReference type="InterPro" id="IPR036821">
    <property type="entry name" value="Peptide_deformylase_sf"/>
</dbReference>
<dbReference type="NCBIfam" id="TIGR00079">
    <property type="entry name" value="pept_deformyl"/>
    <property type="match status" value="1"/>
</dbReference>
<dbReference type="NCBIfam" id="NF001159">
    <property type="entry name" value="PRK00150.1-3"/>
    <property type="match status" value="1"/>
</dbReference>
<dbReference type="PANTHER" id="PTHR10458">
    <property type="entry name" value="PEPTIDE DEFORMYLASE"/>
    <property type="match status" value="1"/>
</dbReference>
<dbReference type="PANTHER" id="PTHR10458:SF22">
    <property type="entry name" value="PEPTIDE DEFORMYLASE"/>
    <property type="match status" value="1"/>
</dbReference>
<dbReference type="Pfam" id="PF01327">
    <property type="entry name" value="Pep_deformylase"/>
    <property type="match status" value="1"/>
</dbReference>
<dbReference type="PIRSF" id="PIRSF004749">
    <property type="entry name" value="Pep_def"/>
    <property type="match status" value="1"/>
</dbReference>
<dbReference type="PRINTS" id="PR01576">
    <property type="entry name" value="PDEFORMYLASE"/>
</dbReference>
<dbReference type="SUPFAM" id="SSF56420">
    <property type="entry name" value="Peptide deformylase"/>
    <property type="match status" value="1"/>
</dbReference>
<gene>
    <name evidence="1" type="primary">def</name>
    <name type="ordered locus">OTT_1330</name>
</gene>
<organism>
    <name type="scientific">Orientia tsutsugamushi (strain Ikeda)</name>
    <name type="common">Rickettsia tsutsugamushi</name>
    <dbReference type="NCBI Taxonomy" id="334380"/>
    <lineage>
        <taxon>Bacteria</taxon>
        <taxon>Pseudomonadati</taxon>
        <taxon>Pseudomonadota</taxon>
        <taxon>Alphaproteobacteria</taxon>
        <taxon>Rickettsiales</taxon>
        <taxon>Rickettsiaceae</taxon>
        <taxon>Rickettsieae</taxon>
        <taxon>Orientia</taxon>
    </lineage>
</organism>